<feature type="chain" id="PRO_0000268929" description="HTH-type transcriptional regulator IscR">
    <location>
        <begin position="1"/>
        <end position="165"/>
    </location>
</feature>
<feature type="domain" description="HTH rrf2-type" evidence="1">
    <location>
        <begin position="2"/>
        <end position="131"/>
    </location>
</feature>
<feature type="DNA-binding region" description="H-T-H motif" evidence="1">
    <location>
        <begin position="28"/>
        <end position="51"/>
    </location>
</feature>
<feature type="region of interest" description="Disordered" evidence="2">
    <location>
        <begin position="144"/>
        <end position="165"/>
    </location>
</feature>
<feature type="compositionally biased region" description="Polar residues" evidence="2">
    <location>
        <begin position="153"/>
        <end position="165"/>
    </location>
</feature>
<feature type="binding site" evidence="1">
    <location>
        <position position="92"/>
    </location>
    <ligand>
        <name>[2Fe-2S] cluster</name>
        <dbReference type="ChEBI" id="CHEBI:190135"/>
    </ligand>
</feature>
<feature type="binding site" evidence="1">
    <location>
        <position position="98"/>
    </location>
    <ligand>
        <name>[2Fe-2S] cluster</name>
        <dbReference type="ChEBI" id="CHEBI:190135"/>
    </ligand>
</feature>
<feature type="binding site" evidence="1">
    <location>
        <position position="104"/>
    </location>
    <ligand>
        <name>[2Fe-2S] cluster</name>
        <dbReference type="ChEBI" id="CHEBI:190135"/>
    </ligand>
</feature>
<proteinExistence type="inferred from homology"/>
<dbReference type="EMBL" id="AP008232">
    <property type="protein sequence ID" value="BAE75045.1"/>
    <property type="molecule type" value="Genomic_DNA"/>
</dbReference>
<dbReference type="RefSeq" id="WP_011411594.1">
    <property type="nucleotide sequence ID" value="NC_007712.1"/>
</dbReference>
<dbReference type="SMR" id="Q2NS30"/>
<dbReference type="STRING" id="343509.SG1770"/>
<dbReference type="KEGG" id="sgl:SG1770"/>
<dbReference type="eggNOG" id="COG1959">
    <property type="taxonomic scope" value="Bacteria"/>
</dbReference>
<dbReference type="HOGENOM" id="CLU_107144_0_0_6"/>
<dbReference type="OrthoDB" id="9808360at2"/>
<dbReference type="BioCyc" id="SGLO343509:SGP1_RS16090-MONOMER"/>
<dbReference type="Proteomes" id="UP000001932">
    <property type="component" value="Chromosome"/>
</dbReference>
<dbReference type="GO" id="GO:0005829">
    <property type="term" value="C:cytosol"/>
    <property type="evidence" value="ECO:0007669"/>
    <property type="project" value="TreeGrafter"/>
</dbReference>
<dbReference type="GO" id="GO:0051537">
    <property type="term" value="F:2 iron, 2 sulfur cluster binding"/>
    <property type="evidence" value="ECO:0007669"/>
    <property type="project" value="UniProtKB-KW"/>
</dbReference>
<dbReference type="GO" id="GO:0003700">
    <property type="term" value="F:DNA-binding transcription factor activity"/>
    <property type="evidence" value="ECO:0007669"/>
    <property type="project" value="UniProtKB-UniRule"/>
</dbReference>
<dbReference type="GO" id="GO:0003690">
    <property type="term" value="F:double-stranded DNA binding"/>
    <property type="evidence" value="ECO:0007669"/>
    <property type="project" value="UniProtKB-UniRule"/>
</dbReference>
<dbReference type="GO" id="GO:0005506">
    <property type="term" value="F:iron ion binding"/>
    <property type="evidence" value="ECO:0007669"/>
    <property type="project" value="UniProtKB-UniRule"/>
</dbReference>
<dbReference type="FunFam" id="1.10.10.10:FF:000026">
    <property type="entry name" value="HTH-type transcriptional regulator IscR"/>
    <property type="match status" value="1"/>
</dbReference>
<dbReference type="Gene3D" id="1.10.10.10">
    <property type="entry name" value="Winged helix-like DNA-binding domain superfamily/Winged helix DNA-binding domain"/>
    <property type="match status" value="1"/>
</dbReference>
<dbReference type="HAMAP" id="MF_01176">
    <property type="entry name" value="HTH_type_IscR"/>
    <property type="match status" value="1"/>
</dbReference>
<dbReference type="InterPro" id="IPR010242">
    <property type="entry name" value="TF_HTH_IscR"/>
</dbReference>
<dbReference type="InterPro" id="IPR000944">
    <property type="entry name" value="Tscrpt_reg_Rrf2"/>
</dbReference>
<dbReference type="InterPro" id="IPR036388">
    <property type="entry name" value="WH-like_DNA-bd_sf"/>
</dbReference>
<dbReference type="InterPro" id="IPR036390">
    <property type="entry name" value="WH_DNA-bd_sf"/>
</dbReference>
<dbReference type="NCBIfam" id="TIGR02010">
    <property type="entry name" value="IscR"/>
    <property type="match status" value="1"/>
</dbReference>
<dbReference type="NCBIfam" id="NF008110">
    <property type="entry name" value="PRK10857.1"/>
    <property type="match status" value="1"/>
</dbReference>
<dbReference type="NCBIfam" id="TIGR00738">
    <property type="entry name" value="rrf2_super"/>
    <property type="match status" value="1"/>
</dbReference>
<dbReference type="PANTHER" id="PTHR33221:SF5">
    <property type="entry name" value="HTH-TYPE TRANSCRIPTIONAL REGULATOR ISCR"/>
    <property type="match status" value="1"/>
</dbReference>
<dbReference type="PANTHER" id="PTHR33221">
    <property type="entry name" value="WINGED HELIX-TURN-HELIX TRANSCRIPTIONAL REGULATOR, RRF2 FAMILY"/>
    <property type="match status" value="1"/>
</dbReference>
<dbReference type="Pfam" id="PF02082">
    <property type="entry name" value="Rrf2"/>
    <property type="match status" value="1"/>
</dbReference>
<dbReference type="SUPFAM" id="SSF46785">
    <property type="entry name" value="Winged helix' DNA-binding domain"/>
    <property type="match status" value="1"/>
</dbReference>
<dbReference type="PROSITE" id="PS51197">
    <property type="entry name" value="HTH_RRF2_2"/>
    <property type="match status" value="1"/>
</dbReference>
<gene>
    <name evidence="1" type="primary">iscR</name>
    <name type="ordered locus">SG1770</name>
</gene>
<sequence>MRLTSKGRYAVTAMLDVALHSGKGPVPLAEISERQGISLSYLEQLFSRLRKHELVASVRGPGGGYLLGRDSDQIAVGAVITAVDESVDATRCQGKEGCQGGDRCLTHVLWRDLSVRISEFLNNITLAELVSNEEILDVVDRQDNDTRRPLTNGRPQETINVNLHA</sequence>
<comment type="function">
    <text evidence="1">Regulates the transcription of several operons and genes involved in the biogenesis of Fe-S clusters and Fe-S-containing proteins.</text>
</comment>
<comment type="cofactor">
    <cofactor evidence="1">
        <name>[2Fe-2S] cluster</name>
        <dbReference type="ChEBI" id="CHEBI:190135"/>
    </cofactor>
    <text evidence="1">Binds 1 [2Fe-2S] cluster.</text>
</comment>
<reference key="1">
    <citation type="journal article" date="2006" name="Genome Res.">
        <title>Massive genome erosion and functional adaptations provide insights into the symbiotic lifestyle of Sodalis glossinidius in the tsetse host.</title>
        <authorList>
            <person name="Toh H."/>
            <person name="Weiss B.L."/>
            <person name="Perkin S.A.H."/>
            <person name="Yamashita A."/>
            <person name="Oshima K."/>
            <person name="Hattori M."/>
            <person name="Aksoy S."/>
        </authorList>
    </citation>
    <scope>NUCLEOTIDE SEQUENCE [LARGE SCALE GENOMIC DNA]</scope>
    <source>
        <strain>morsitans</strain>
    </source>
</reference>
<keyword id="KW-0001">2Fe-2S</keyword>
<keyword id="KW-0010">Activator</keyword>
<keyword id="KW-0238">DNA-binding</keyword>
<keyword id="KW-0408">Iron</keyword>
<keyword id="KW-0411">Iron-sulfur</keyword>
<keyword id="KW-0479">Metal-binding</keyword>
<keyword id="KW-0678">Repressor</keyword>
<keyword id="KW-0804">Transcription</keyword>
<keyword id="KW-0805">Transcription regulation</keyword>
<organism>
    <name type="scientific">Sodalis glossinidius (strain morsitans)</name>
    <dbReference type="NCBI Taxonomy" id="343509"/>
    <lineage>
        <taxon>Bacteria</taxon>
        <taxon>Pseudomonadati</taxon>
        <taxon>Pseudomonadota</taxon>
        <taxon>Gammaproteobacteria</taxon>
        <taxon>Enterobacterales</taxon>
        <taxon>Bruguierivoracaceae</taxon>
        <taxon>Sodalis</taxon>
    </lineage>
</organism>
<accession>Q2NS30</accession>
<name>ISCR_SODGM</name>
<evidence type="ECO:0000255" key="1">
    <source>
        <dbReference type="HAMAP-Rule" id="MF_01176"/>
    </source>
</evidence>
<evidence type="ECO:0000256" key="2">
    <source>
        <dbReference type="SAM" id="MobiDB-lite"/>
    </source>
</evidence>
<protein>
    <recommendedName>
        <fullName evidence="1">HTH-type transcriptional regulator IscR</fullName>
    </recommendedName>
</protein>